<keyword id="KW-1185">Reference proteome</keyword>
<keyword id="KW-0687">Ribonucleoprotein</keyword>
<keyword id="KW-0689">Ribosomal protein</keyword>
<name>RL35_LIMRD</name>
<evidence type="ECO:0000255" key="1">
    <source>
        <dbReference type="HAMAP-Rule" id="MF_00514"/>
    </source>
</evidence>
<evidence type="ECO:0000256" key="2">
    <source>
        <dbReference type="SAM" id="MobiDB-lite"/>
    </source>
</evidence>
<evidence type="ECO:0000305" key="3"/>
<dbReference type="EMBL" id="CP000705">
    <property type="protein sequence ID" value="ABQ83497.1"/>
    <property type="molecule type" value="Genomic_DNA"/>
</dbReference>
<dbReference type="RefSeq" id="WP_003664106.1">
    <property type="nucleotide sequence ID" value="NZ_AZDD01000001.1"/>
</dbReference>
<dbReference type="SMR" id="A5VKX3"/>
<dbReference type="STRING" id="557436.Lreu_1240"/>
<dbReference type="GeneID" id="77191910"/>
<dbReference type="KEGG" id="lre:Lreu_1240"/>
<dbReference type="PATRIC" id="fig|557436.17.peg.108"/>
<dbReference type="eggNOG" id="COG0291">
    <property type="taxonomic scope" value="Bacteria"/>
</dbReference>
<dbReference type="HOGENOM" id="CLU_169643_3_1_9"/>
<dbReference type="Proteomes" id="UP000001991">
    <property type="component" value="Chromosome"/>
</dbReference>
<dbReference type="GO" id="GO:0022625">
    <property type="term" value="C:cytosolic large ribosomal subunit"/>
    <property type="evidence" value="ECO:0007669"/>
    <property type="project" value="TreeGrafter"/>
</dbReference>
<dbReference type="GO" id="GO:0003735">
    <property type="term" value="F:structural constituent of ribosome"/>
    <property type="evidence" value="ECO:0007669"/>
    <property type="project" value="InterPro"/>
</dbReference>
<dbReference type="GO" id="GO:0006412">
    <property type="term" value="P:translation"/>
    <property type="evidence" value="ECO:0007669"/>
    <property type="project" value="UniProtKB-UniRule"/>
</dbReference>
<dbReference type="FunFam" id="4.10.410.60:FF:000001">
    <property type="entry name" value="50S ribosomal protein L35"/>
    <property type="match status" value="1"/>
</dbReference>
<dbReference type="Gene3D" id="4.10.410.60">
    <property type="match status" value="1"/>
</dbReference>
<dbReference type="HAMAP" id="MF_00514">
    <property type="entry name" value="Ribosomal_bL35"/>
    <property type="match status" value="1"/>
</dbReference>
<dbReference type="InterPro" id="IPR001706">
    <property type="entry name" value="Ribosomal_bL35"/>
</dbReference>
<dbReference type="InterPro" id="IPR021137">
    <property type="entry name" value="Ribosomal_bL35-like"/>
</dbReference>
<dbReference type="InterPro" id="IPR018265">
    <property type="entry name" value="Ribosomal_bL35_CS"/>
</dbReference>
<dbReference type="InterPro" id="IPR037229">
    <property type="entry name" value="Ribosomal_bL35_sf"/>
</dbReference>
<dbReference type="NCBIfam" id="TIGR00001">
    <property type="entry name" value="rpmI_bact"/>
    <property type="match status" value="1"/>
</dbReference>
<dbReference type="PANTHER" id="PTHR33343">
    <property type="entry name" value="54S RIBOSOMAL PROTEIN BL35M"/>
    <property type="match status" value="1"/>
</dbReference>
<dbReference type="PANTHER" id="PTHR33343:SF1">
    <property type="entry name" value="LARGE RIBOSOMAL SUBUNIT PROTEIN BL35M"/>
    <property type="match status" value="1"/>
</dbReference>
<dbReference type="Pfam" id="PF01632">
    <property type="entry name" value="Ribosomal_L35p"/>
    <property type="match status" value="1"/>
</dbReference>
<dbReference type="PRINTS" id="PR00064">
    <property type="entry name" value="RIBOSOMALL35"/>
</dbReference>
<dbReference type="SUPFAM" id="SSF143034">
    <property type="entry name" value="L35p-like"/>
    <property type="match status" value="1"/>
</dbReference>
<dbReference type="PROSITE" id="PS00936">
    <property type="entry name" value="RIBOSOMAL_L35"/>
    <property type="match status" value="1"/>
</dbReference>
<gene>
    <name evidence="1" type="primary">rpmI</name>
    <name type="ordered locus">Lreu_1240</name>
</gene>
<accession>A5VKX3</accession>
<proteinExistence type="inferred from homology"/>
<feature type="chain" id="PRO_1000060892" description="Large ribosomal subunit protein bL35">
    <location>
        <begin position="1"/>
        <end position="65"/>
    </location>
</feature>
<feature type="region of interest" description="Disordered" evidence="2">
    <location>
        <begin position="1"/>
        <end position="52"/>
    </location>
</feature>
<feature type="compositionally biased region" description="Basic residues" evidence="2">
    <location>
        <begin position="31"/>
        <end position="44"/>
    </location>
</feature>
<sequence>MPKMKSNRAAAKRFKRTANGGFKSGNSFTSHRFHGKTKKQRRQLRGLSMMDKTNVKRYKKLLPFK</sequence>
<protein>
    <recommendedName>
        <fullName evidence="1">Large ribosomal subunit protein bL35</fullName>
    </recommendedName>
    <alternativeName>
        <fullName evidence="3">50S ribosomal protein L35</fullName>
    </alternativeName>
</protein>
<comment type="similarity">
    <text evidence="1">Belongs to the bacterial ribosomal protein bL35 family.</text>
</comment>
<reference key="1">
    <citation type="journal article" date="2011" name="PLoS Genet.">
        <title>The evolution of host specialization in the vertebrate gut symbiont Lactobacillus reuteri.</title>
        <authorList>
            <person name="Frese S.A."/>
            <person name="Benson A.K."/>
            <person name="Tannock G.W."/>
            <person name="Loach D.M."/>
            <person name="Kim J."/>
            <person name="Zhang M."/>
            <person name="Oh P.L."/>
            <person name="Heng N.C."/>
            <person name="Patil P.B."/>
            <person name="Juge N."/>
            <person name="Mackenzie D.A."/>
            <person name="Pearson B.M."/>
            <person name="Lapidus A."/>
            <person name="Dalin E."/>
            <person name="Tice H."/>
            <person name="Goltsman E."/>
            <person name="Land M."/>
            <person name="Hauser L."/>
            <person name="Ivanova N."/>
            <person name="Kyrpides N.C."/>
            <person name="Walter J."/>
        </authorList>
    </citation>
    <scope>NUCLEOTIDE SEQUENCE [LARGE SCALE GENOMIC DNA]</scope>
    <source>
        <strain>DSM 20016</strain>
    </source>
</reference>
<organism>
    <name type="scientific">Limosilactobacillus reuteri (strain DSM 20016)</name>
    <name type="common">Lactobacillus reuteri</name>
    <dbReference type="NCBI Taxonomy" id="557436"/>
    <lineage>
        <taxon>Bacteria</taxon>
        <taxon>Bacillati</taxon>
        <taxon>Bacillota</taxon>
        <taxon>Bacilli</taxon>
        <taxon>Lactobacillales</taxon>
        <taxon>Lactobacillaceae</taxon>
        <taxon>Limosilactobacillus</taxon>
    </lineage>
</organism>